<reference key="1">
    <citation type="journal article" date="2005" name="J. Bacteriol.">
        <title>Completion of the genome sequence of Brucella abortus and comparison to the highly similar genomes of Brucella melitensis and Brucella suis.</title>
        <authorList>
            <person name="Halling S.M."/>
            <person name="Peterson-Burch B.D."/>
            <person name="Bricker B.J."/>
            <person name="Zuerner R.L."/>
            <person name="Qing Z."/>
            <person name="Li L.-L."/>
            <person name="Kapur V."/>
            <person name="Alt D.P."/>
            <person name="Olsen S.C."/>
        </authorList>
    </citation>
    <scope>NUCLEOTIDE SEQUENCE [LARGE SCALE GENOMIC DNA]</scope>
    <source>
        <strain>9-941</strain>
    </source>
</reference>
<proteinExistence type="inferred from homology"/>
<dbReference type="EC" id="2.5.1.55" evidence="1"/>
<dbReference type="EMBL" id="AE017223">
    <property type="protein sequence ID" value="AAX74478.1"/>
    <property type="molecule type" value="Genomic_DNA"/>
</dbReference>
<dbReference type="RefSeq" id="WP_002966843.1">
    <property type="nucleotide sequence ID" value="NC_006932.1"/>
</dbReference>
<dbReference type="SMR" id="Q57D06"/>
<dbReference type="EnsemblBacteria" id="AAX74478">
    <property type="protein sequence ID" value="AAX74478"/>
    <property type="gene ID" value="BruAb1_1139"/>
</dbReference>
<dbReference type="GeneID" id="93016530"/>
<dbReference type="KEGG" id="bmb:BruAb1_1139"/>
<dbReference type="HOGENOM" id="CLU_036666_0_0_5"/>
<dbReference type="UniPathway" id="UPA00030"/>
<dbReference type="UniPathway" id="UPA00357">
    <property type="reaction ID" value="UER00474"/>
</dbReference>
<dbReference type="Proteomes" id="UP000000540">
    <property type="component" value="Chromosome I"/>
</dbReference>
<dbReference type="GO" id="GO:0005737">
    <property type="term" value="C:cytoplasm"/>
    <property type="evidence" value="ECO:0007669"/>
    <property type="project" value="UniProtKB-SubCell"/>
</dbReference>
<dbReference type="GO" id="GO:0008676">
    <property type="term" value="F:3-deoxy-8-phosphooctulonate synthase activity"/>
    <property type="evidence" value="ECO:0007669"/>
    <property type="project" value="UniProtKB-UniRule"/>
</dbReference>
<dbReference type="GO" id="GO:0019294">
    <property type="term" value="P:keto-3-deoxy-D-manno-octulosonic acid biosynthetic process"/>
    <property type="evidence" value="ECO:0007669"/>
    <property type="project" value="UniProtKB-UniRule"/>
</dbReference>
<dbReference type="Gene3D" id="3.20.20.70">
    <property type="entry name" value="Aldolase class I"/>
    <property type="match status" value="1"/>
</dbReference>
<dbReference type="HAMAP" id="MF_00056">
    <property type="entry name" value="KDO8P_synth"/>
    <property type="match status" value="1"/>
</dbReference>
<dbReference type="InterPro" id="IPR013785">
    <property type="entry name" value="Aldolase_TIM"/>
</dbReference>
<dbReference type="InterPro" id="IPR006218">
    <property type="entry name" value="DAHP1/KDSA"/>
</dbReference>
<dbReference type="InterPro" id="IPR006269">
    <property type="entry name" value="KDO8P_synthase"/>
</dbReference>
<dbReference type="NCBIfam" id="TIGR01362">
    <property type="entry name" value="KDO8P_synth"/>
    <property type="match status" value="1"/>
</dbReference>
<dbReference type="NCBIfam" id="NF003543">
    <property type="entry name" value="PRK05198.1"/>
    <property type="match status" value="1"/>
</dbReference>
<dbReference type="PANTHER" id="PTHR21057">
    <property type="entry name" value="PHOSPHO-2-DEHYDRO-3-DEOXYHEPTONATE ALDOLASE"/>
    <property type="match status" value="1"/>
</dbReference>
<dbReference type="Pfam" id="PF00793">
    <property type="entry name" value="DAHP_synth_1"/>
    <property type="match status" value="1"/>
</dbReference>
<dbReference type="SUPFAM" id="SSF51569">
    <property type="entry name" value="Aldolase"/>
    <property type="match status" value="1"/>
</dbReference>
<accession>Q57D06</accession>
<comment type="catalytic activity">
    <reaction evidence="1">
        <text>D-arabinose 5-phosphate + phosphoenolpyruvate + H2O = 3-deoxy-alpha-D-manno-2-octulosonate-8-phosphate + phosphate</text>
        <dbReference type="Rhea" id="RHEA:14053"/>
        <dbReference type="ChEBI" id="CHEBI:15377"/>
        <dbReference type="ChEBI" id="CHEBI:43474"/>
        <dbReference type="ChEBI" id="CHEBI:57693"/>
        <dbReference type="ChEBI" id="CHEBI:58702"/>
        <dbReference type="ChEBI" id="CHEBI:85985"/>
        <dbReference type="EC" id="2.5.1.55"/>
    </reaction>
</comment>
<comment type="pathway">
    <text evidence="1">Carbohydrate biosynthesis; 3-deoxy-D-manno-octulosonate biosynthesis; 3-deoxy-D-manno-octulosonate from D-ribulose 5-phosphate: step 2/3.</text>
</comment>
<comment type="pathway">
    <text evidence="1">Bacterial outer membrane biogenesis; lipopolysaccharide biosynthesis.</text>
</comment>
<comment type="subcellular location">
    <subcellularLocation>
        <location evidence="1">Cytoplasm</location>
    </subcellularLocation>
</comment>
<comment type="similarity">
    <text evidence="1">Belongs to the KdsA family.</text>
</comment>
<gene>
    <name evidence="1" type="primary">kdsA</name>
    <name type="ordered locus">BruAb1_1139</name>
</gene>
<keyword id="KW-0963">Cytoplasm</keyword>
<keyword id="KW-0448">Lipopolysaccharide biosynthesis</keyword>
<keyword id="KW-0808">Transferase</keyword>
<feature type="chain" id="PRO_0000304435" description="2-dehydro-3-deoxyphosphooctonate aldolase">
    <location>
        <begin position="1"/>
        <end position="277"/>
    </location>
</feature>
<protein>
    <recommendedName>
        <fullName evidence="1">2-dehydro-3-deoxyphosphooctonate aldolase</fullName>
        <ecNumber evidence="1">2.5.1.55</ecNumber>
    </recommendedName>
    <alternativeName>
        <fullName evidence="1">3-deoxy-D-manno-octulosonic acid 8-phosphate synthase</fullName>
    </alternativeName>
    <alternativeName>
        <fullName evidence="1">KDO-8-phosphate synthase</fullName>
        <shortName evidence="1">KDO 8-P synthase</shortName>
        <shortName evidence="1">KDOPS</shortName>
    </alternativeName>
    <alternativeName>
        <fullName evidence="1">Phospho-2-dehydro-3-deoxyoctonate aldolase</fullName>
    </alternativeName>
</protein>
<sequence>MVTANSTVKVGNVTFSNSAPLALIAGPCQMETRDHAFEMAGRLKEMTDKLGIGLVYKSSFDKANRTSLKAARGIGLEKALEVFSDLKKEYGFPVLTDIHTEEQCAAVAPVVDVLQIPAFLCRQTDLLIAAARTGRVVNVKKGQFLAPWDMKNVLAKITESGNPNVLATERGVSFGYNTLVSDMRALPIMAGLGAPVIFDATHSVQQPGGQGGSTGGQREFVETLARAAVAVGVAGFFIETHEDPDNAPSDGPNMVPIDKMPALLEKLMAFDRIAKAL</sequence>
<name>KDSA_BRUAB</name>
<evidence type="ECO:0000255" key="1">
    <source>
        <dbReference type="HAMAP-Rule" id="MF_00056"/>
    </source>
</evidence>
<organism>
    <name type="scientific">Brucella abortus biovar 1 (strain 9-941)</name>
    <dbReference type="NCBI Taxonomy" id="262698"/>
    <lineage>
        <taxon>Bacteria</taxon>
        <taxon>Pseudomonadati</taxon>
        <taxon>Pseudomonadota</taxon>
        <taxon>Alphaproteobacteria</taxon>
        <taxon>Hyphomicrobiales</taxon>
        <taxon>Brucellaceae</taxon>
        <taxon>Brucella/Ochrobactrum group</taxon>
        <taxon>Brucella</taxon>
    </lineage>
</organism>